<gene>
    <name type="primary">uxuR</name>
    <name type="ordered locus">HI_0054</name>
</gene>
<feature type="chain" id="PRO_0000050671" description="Uxu operon regulator">
    <location>
        <begin position="1"/>
        <end position="266"/>
    </location>
</feature>
<feature type="domain" description="HTH gntR-type" evidence="2">
    <location>
        <begin position="23"/>
        <end position="91"/>
    </location>
</feature>
<feature type="DNA-binding region" description="H-T-H motif" evidence="2">
    <location>
        <begin position="51"/>
        <end position="70"/>
    </location>
</feature>
<keyword id="KW-0238">DNA-binding</keyword>
<keyword id="KW-1185">Reference proteome</keyword>
<keyword id="KW-0678">Repressor</keyword>
<keyword id="KW-0804">Transcription</keyword>
<keyword id="KW-0805">Transcription regulation</keyword>
<comment type="function">
    <text evidence="1">Repressor for the uxuRBA operon.</text>
</comment>
<accession>P44487</accession>
<name>UXUR_HAEIN</name>
<organism>
    <name type="scientific">Haemophilus influenzae (strain ATCC 51907 / DSM 11121 / KW20 / Rd)</name>
    <dbReference type="NCBI Taxonomy" id="71421"/>
    <lineage>
        <taxon>Bacteria</taxon>
        <taxon>Pseudomonadati</taxon>
        <taxon>Pseudomonadota</taxon>
        <taxon>Gammaproteobacteria</taxon>
        <taxon>Pasteurellales</taxon>
        <taxon>Pasteurellaceae</taxon>
        <taxon>Haemophilus</taxon>
    </lineage>
</organism>
<dbReference type="EMBL" id="L42023">
    <property type="protein sequence ID" value="AAC21732.1"/>
    <property type="molecule type" value="Genomic_DNA"/>
</dbReference>
<dbReference type="PIR" id="D64045">
    <property type="entry name" value="D64045"/>
</dbReference>
<dbReference type="RefSeq" id="NP_438227.2">
    <property type="nucleotide sequence ID" value="NC_000907.1"/>
</dbReference>
<dbReference type="SMR" id="P44487"/>
<dbReference type="STRING" id="71421.HI_0054"/>
<dbReference type="EnsemblBacteria" id="AAC21732">
    <property type="protein sequence ID" value="AAC21732"/>
    <property type="gene ID" value="HI_0054"/>
</dbReference>
<dbReference type="KEGG" id="hin:HI_0054"/>
<dbReference type="PATRIC" id="fig|71421.8.peg.54"/>
<dbReference type="eggNOG" id="COG2186">
    <property type="taxonomic scope" value="Bacteria"/>
</dbReference>
<dbReference type="HOGENOM" id="CLU_017584_9_5_6"/>
<dbReference type="OrthoDB" id="5450856at2"/>
<dbReference type="PhylomeDB" id="P44487"/>
<dbReference type="Proteomes" id="UP000000579">
    <property type="component" value="Chromosome"/>
</dbReference>
<dbReference type="GO" id="GO:0003677">
    <property type="term" value="F:DNA binding"/>
    <property type="evidence" value="ECO:0007669"/>
    <property type="project" value="UniProtKB-KW"/>
</dbReference>
<dbReference type="GO" id="GO:0003700">
    <property type="term" value="F:DNA-binding transcription factor activity"/>
    <property type="evidence" value="ECO:0007669"/>
    <property type="project" value="InterPro"/>
</dbReference>
<dbReference type="CDD" id="cd07377">
    <property type="entry name" value="WHTH_GntR"/>
    <property type="match status" value="1"/>
</dbReference>
<dbReference type="Gene3D" id="1.20.120.530">
    <property type="entry name" value="GntR ligand-binding domain-like"/>
    <property type="match status" value="1"/>
</dbReference>
<dbReference type="Gene3D" id="1.10.10.10">
    <property type="entry name" value="Winged helix-like DNA-binding domain superfamily/Winged helix DNA-binding domain"/>
    <property type="match status" value="1"/>
</dbReference>
<dbReference type="InterPro" id="IPR011711">
    <property type="entry name" value="GntR_C"/>
</dbReference>
<dbReference type="InterPro" id="IPR008920">
    <property type="entry name" value="TF_FadR/GntR_C"/>
</dbReference>
<dbReference type="InterPro" id="IPR000524">
    <property type="entry name" value="Tscrpt_reg_HTH_GntR"/>
</dbReference>
<dbReference type="InterPro" id="IPR036388">
    <property type="entry name" value="WH-like_DNA-bd_sf"/>
</dbReference>
<dbReference type="InterPro" id="IPR036390">
    <property type="entry name" value="WH_DNA-bd_sf"/>
</dbReference>
<dbReference type="PANTHER" id="PTHR43537">
    <property type="entry name" value="TRANSCRIPTIONAL REGULATOR, GNTR FAMILY"/>
    <property type="match status" value="1"/>
</dbReference>
<dbReference type="PANTHER" id="PTHR43537:SF5">
    <property type="entry name" value="UXU OPERON TRANSCRIPTIONAL REGULATOR"/>
    <property type="match status" value="1"/>
</dbReference>
<dbReference type="Pfam" id="PF07729">
    <property type="entry name" value="FCD"/>
    <property type="match status" value="1"/>
</dbReference>
<dbReference type="Pfam" id="PF00392">
    <property type="entry name" value="GntR"/>
    <property type="match status" value="1"/>
</dbReference>
<dbReference type="PRINTS" id="PR00035">
    <property type="entry name" value="HTHGNTR"/>
</dbReference>
<dbReference type="SMART" id="SM00895">
    <property type="entry name" value="FCD"/>
    <property type="match status" value="1"/>
</dbReference>
<dbReference type="SMART" id="SM00345">
    <property type="entry name" value="HTH_GNTR"/>
    <property type="match status" value="1"/>
</dbReference>
<dbReference type="SUPFAM" id="SSF48008">
    <property type="entry name" value="GntR ligand-binding domain-like"/>
    <property type="match status" value="1"/>
</dbReference>
<dbReference type="SUPFAM" id="SSF46785">
    <property type="entry name" value="Winged helix' DNA-binding domain"/>
    <property type="match status" value="1"/>
</dbReference>
<dbReference type="PROSITE" id="PS50949">
    <property type="entry name" value="HTH_GNTR"/>
    <property type="match status" value="1"/>
</dbReference>
<evidence type="ECO:0000250" key="1"/>
<evidence type="ECO:0000255" key="2">
    <source>
        <dbReference type="PROSITE-ProRule" id="PRU00307"/>
    </source>
</evidence>
<sequence>MSHITKIKNWNTNLRKNMENIVNRTYTRIGQLLKQDISQGIYSIGDKLPTEREISEKFGVSRTIVREAMVMLEVEKLVEVKKGSGVYVVRTPESIHMEHSDLPDVGPFELLQARQLLESSIAEFAALQATKKDILNLKQILNREKELLTQNQDDYSADKDFHLALAEITQNDVLVKLQEQLWQYRFNSAMWAQLHSRILQNDYHHLWIEDHQTILSAIQKKNANEARKAMWQHLENVKVKLFELSDVEDPHFDGYLFNTNPVVVGI</sequence>
<reference key="1">
    <citation type="journal article" date="1995" name="Science">
        <title>Whole-genome random sequencing and assembly of Haemophilus influenzae Rd.</title>
        <authorList>
            <person name="Fleischmann R.D."/>
            <person name="Adams M.D."/>
            <person name="White O."/>
            <person name="Clayton R.A."/>
            <person name="Kirkness E.F."/>
            <person name="Kerlavage A.R."/>
            <person name="Bult C.J."/>
            <person name="Tomb J.-F."/>
            <person name="Dougherty B.A."/>
            <person name="Merrick J.M."/>
            <person name="McKenney K."/>
            <person name="Sutton G.G."/>
            <person name="FitzHugh W."/>
            <person name="Fields C.A."/>
            <person name="Gocayne J.D."/>
            <person name="Scott J.D."/>
            <person name="Shirley R."/>
            <person name="Liu L.-I."/>
            <person name="Glodek A."/>
            <person name="Kelley J.M."/>
            <person name="Weidman J.F."/>
            <person name="Phillips C.A."/>
            <person name="Spriggs T."/>
            <person name="Hedblom E."/>
            <person name="Cotton M.D."/>
            <person name="Utterback T.R."/>
            <person name="Hanna M.C."/>
            <person name="Nguyen D.T."/>
            <person name="Saudek D.M."/>
            <person name="Brandon R.C."/>
            <person name="Fine L.D."/>
            <person name="Fritchman J.L."/>
            <person name="Fuhrmann J.L."/>
            <person name="Geoghagen N.S.M."/>
            <person name="Gnehm C.L."/>
            <person name="McDonald L.A."/>
            <person name="Small K.V."/>
            <person name="Fraser C.M."/>
            <person name="Smith H.O."/>
            <person name="Venter J.C."/>
        </authorList>
    </citation>
    <scope>NUCLEOTIDE SEQUENCE [LARGE SCALE GENOMIC DNA]</scope>
    <source>
        <strain>ATCC 51907 / DSM 11121 / KW20 / Rd</strain>
    </source>
</reference>
<proteinExistence type="inferred from homology"/>
<protein>
    <recommendedName>
        <fullName>Uxu operon regulator</fullName>
    </recommendedName>
</protein>